<dbReference type="EC" id="5.4.99.2"/>
<dbReference type="EMBL" id="AL123456">
    <property type="protein sequence ID" value="CCP44253.1"/>
    <property type="molecule type" value="Genomic_DNA"/>
</dbReference>
<dbReference type="PIR" id="G70711">
    <property type="entry name" value="G70711"/>
</dbReference>
<dbReference type="RefSeq" id="NP_216008.1">
    <property type="nucleotide sequence ID" value="NC_000962.3"/>
</dbReference>
<dbReference type="RefSeq" id="WP_003407585.1">
    <property type="nucleotide sequence ID" value="NZ_NVQJ01000004.1"/>
</dbReference>
<dbReference type="PDB" id="6OXC">
    <property type="method" value="X-ray"/>
    <property type="resolution" value="1.90 A"/>
    <property type="chains" value="B=1-615"/>
</dbReference>
<dbReference type="PDB" id="6OXD">
    <property type="method" value="X-ray"/>
    <property type="resolution" value="2.00 A"/>
    <property type="chains" value="B=1-615"/>
</dbReference>
<dbReference type="PDBsum" id="6OXC"/>
<dbReference type="PDBsum" id="6OXD"/>
<dbReference type="SMR" id="P9WJK7"/>
<dbReference type="FunCoup" id="P9WJK7">
    <property type="interactions" value="145"/>
</dbReference>
<dbReference type="STRING" id="83332.Rv1492"/>
<dbReference type="PaxDb" id="83332-Rv1492"/>
<dbReference type="DNASU" id="886507"/>
<dbReference type="GeneID" id="45425472"/>
<dbReference type="GeneID" id="886507"/>
<dbReference type="KEGG" id="mtu:Rv1492"/>
<dbReference type="KEGG" id="mtv:RVBD_1492"/>
<dbReference type="TubercuList" id="Rv1492"/>
<dbReference type="eggNOG" id="COG1884">
    <property type="taxonomic scope" value="Bacteria"/>
</dbReference>
<dbReference type="InParanoid" id="P9WJK7"/>
<dbReference type="OrthoDB" id="9762378at2"/>
<dbReference type="PhylomeDB" id="P9WJK7"/>
<dbReference type="UniPathway" id="UPA00945">
    <property type="reaction ID" value="UER00910"/>
</dbReference>
<dbReference type="Proteomes" id="UP000001584">
    <property type="component" value="Chromosome"/>
</dbReference>
<dbReference type="GO" id="GO:0005737">
    <property type="term" value="C:cytoplasm"/>
    <property type="evidence" value="ECO:0000318"/>
    <property type="project" value="GO_Central"/>
</dbReference>
<dbReference type="GO" id="GO:0005829">
    <property type="term" value="C:cytosol"/>
    <property type="evidence" value="ECO:0007005"/>
    <property type="project" value="MTBBASE"/>
</dbReference>
<dbReference type="GO" id="GO:0009274">
    <property type="term" value="C:peptidoglycan-based cell wall"/>
    <property type="evidence" value="ECO:0007005"/>
    <property type="project" value="MTBBASE"/>
</dbReference>
<dbReference type="GO" id="GO:0005886">
    <property type="term" value="C:plasma membrane"/>
    <property type="evidence" value="ECO:0007005"/>
    <property type="project" value="MTBBASE"/>
</dbReference>
<dbReference type="GO" id="GO:0031419">
    <property type="term" value="F:cobalamin binding"/>
    <property type="evidence" value="ECO:0000318"/>
    <property type="project" value="GO_Central"/>
</dbReference>
<dbReference type="GO" id="GO:0046872">
    <property type="term" value="F:metal ion binding"/>
    <property type="evidence" value="ECO:0007669"/>
    <property type="project" value="InterPro"/>
</dbReference>
<dbReference type="GO" id="GO:0004494">
    <property type="term" value="F:methylmalonyl-CoA mutase activity"/>
    <property type="evidence" value="ECO:0000318"/>
    <property type="project" value="GO_Central"/>
</dbReference>
<dbReference type="GO" id="GO:0019652">
    <property type="term" value="P:lactate fermentation to propionate and acetate"/>
    <property type="evidence" value="ECO:0007669"/>
    <property type="project" value="InterPro"/>
</dbReference>
<dbReference type="GO" id="GO:0019678">
    <property type="term" value="P:propionate metabolic process, methylmalonyl pathway"/>
    <property type="evidence" value="ECO:0000315"/>
    <property type="project" value="MTBBASE"/>
</dbReference>
<dbReference type="CDD" id="cd03677">
    <property type="entry name" value="MM_CoA_mutase_beta"/>
    <property type="match status" value="1"/>
</dbReference>
<dbReference type="Gene3D" id="3.40.50.280">
    <property type="entry name" value="Cobalamin-binding domain"/>
    <property type="match status" value="1"/>
</dbReference>
<dbReference type="Gene3D" id="3.20.20.240">
    <property type="entry name" value="Methylmalonyl-CoA mutase"/>
    <property type="match status" value="1"/>
</dbReference>
<dbReference type="InterPro" id="IPR016176">
    <property type="entry name" value="Cbl-dep_enz_cat"/>
</dbReference>
<dbReference type="InterPro" id="IPR036724">
    <property type="entry name" value="Cobalamin-bd_sf"/>
</dbReference>
<dbReference type="InterPro" id="IPR006099">
    <property type="entry name" value="MeMalonylCoA_mutase_a/b_cat"/>
</dbReference>
<dbReference type="InterPro" id="IPR004608">
    <property type="entry name" value="MMCoA_mutase_b"/>
</dbReference>
<dbReference type="NCBIfam" id="TIGR00642">
    <property type="entry name" value="mmCoA_mut_beta"/>
    <property type="match status" value="1"/>
</dbReference>
<dbReference type="PANTHER" id="PTHR48101:SF1">
    <property type="entry name" value="METHYLMALONYL-COA MUTASE, LARGE SUBUNIT"/>
    <property type="match status" value="1"/>
</dbReference>
<dbReference type="PANTHER" id="PTHR48101">
    <property type="entry name" value="METHYLMALONYL-COA MUTASE, MITOCHONDRIAL-RELATED"/>
    <property type="match status" value="1"/>
</dbReference>
<dbReference type="Pfam" id="PF01642">
    <property type="entry name" value="MM_CoA_mutase"/>
    <property type="match status" value="1"/>
</dbReference>
<dbReference type="SUPFAM" id="SSF52242">
    <property type="entry name" value="Cobalamin (vitamin B12)-binding domain"/>
    <property type="match status" value="1"/>
</dbReference>
<dbReference type="SUPFAM" id="SSF51703">
    <property type="entry name" value="Cobalamin (vitamin B12)-dependent enzymes"/>
    <property type="match status" value="1"/>
</dbReference>
<dbReference type="PROSITE" id="PS00544">
    <property type="entry name" value="METMALONYL_COA_MUTASE"/>
    <property type="match status" value="1"/>
</dbReference>
<reference key="1">
    <citation type="journal article" date="1998" name="Nature">
        <title>Deciphering the biology of Mycobacterium tuberculosis from the complete genome sequence.</title>
        <authorList>
            <person name="Cole S.T."/>
            <person name="Brosch R."/>
            <person name="Parkhill J."/>
            <person name="Garnier T."/>
            <person name="Churcher C.M."/>
            <person name="Harris D.E."/>
            <person name="Gordon S.V."/>
            <person name="Eiglmeier K."/>
            <person name="Gas S."/>
            <person name="Barry C.E. III"/>
            <person name="Tekaia F."/>
            <person name="Badcock K."/>
            <person name="Basham D."/>
            <person name="Brown D."/>
            <person name="Chillingworth T."/>
            <person name="Connor R."/>
            <person name="Davies R.M."/>
            <person name="Devlin K."/>
            <person name="Feltwell T."/>
            <person name="Gentles S."/>
            <person name="Hamlin N."/>
            <person name="Holroyd S."/>
            <person name="Hornsby T."/>
            <person name="Jagels K."/>
            <person name="Krogh A."/>
            <person name="McLean J."/>
            <person name="Moule S."/>
            <person name="Murphy L.D."/>
            <person name="Oliver S."/>
            <person name="Osborne J."/>
            <person name="Quail M.A."/>
            <person name="Rajandream M.A."/>
            <person name="Rogers J."/>
            <person name="Rutter S."/>
            <person name="Seeger K."/>
            <person name="Skelton S."/>
            <person name="Squares S."/>
            <person name="Squares R."/>
            <person name="Sulston J.E."/>
            <person name="Taylor K."/>
            <person name="Whitehead S."/>
            <person name="Barrell B.G."/>
        </authorList>
    </citation>
    <scope>NUCLEOTIDE SEQUENCE [LARGE SCALE GENOMIC DNA]</scope>
    <source>
        <strain>ATCC 25618 / H37Rv</strain>
    </source>
</reference>
<reference key="2">
    <citation type="journal article" date="2008" name="BMC Syst. Biol.">
        <title>targetTB: a target identification pipeline for Mycobacterium tuberculosis through an interactome, reactome and genome-scale structural analysis.</title>
        <authorList>
            <person name="Raman K."/>
            <person name="Yeturu K."/>
            <person name="Chandra N."/>
        </authorList>
    </citation>
    <scope>IDENTIFICATION AS A DRUG TARGET [LARGE SCALE ANALYSIS]</scope>
</reference>
<reference key="3">
    <citation type="journal article" date="2011" name="Mol. Cell. Proteomics">
        <title>Proteogenomic analysis of Mycobacterium tuberculosis by high resolution mass spectrometry.</title>
        <authorList>
            <person name="Kelkar D.S."/>
            <person name="Kumar D."/>
            <person name="Kumar P."/>
            <person name="Balakrishnan L."/>
            <person name="Muthusamy B."/>
            <person name="Yadav A.K."/>
            <person name="Shrivastava P."/>
            <person name="Marimuthu A."/>
            <person name="Anand S."/>
            <person name="Sundaram H."/>
            <person name="Kingsbury R."/>
            <person name="Harsha H.C."/>
            <person name="Nair B."/>
            <person name="Prasad T.S."/>
            <person name="Chauhan D.S."/>
            <person name="Katoch K."/>
            <person name="Katoch V.M."/>
            <person name="Kumar P."/>
            <person name="Chaerkady R."/>
            <person name="Ramachandran S."/>
            <person name="Dash D."/>
            <person name="Pandey A."/>
        </authorList>
    </citation>
    <scope>IDENTIFICATION BY MASS SPECTROMETRY [LARGE SCALE ANALYSIS]</scope>
    <source>
        <strain>ATCC 25618 / H37Rv</strain>
    </source>
</reference>
<feature type="chain" id="PRO_0000194265" description="Probable methylmalonyl-CoA mutase small subunit">
    <location>
        <begin position="1"/>
        <end position="615"/>
    </location>
</feature>
<feature type="helix" evidence="3">
    <location>
        <begin position="12"/>
        <end position="27"/>
    </location>
</feature>
<feature type="helix" evidence="3">
    <location>
        <begin position="41"/>
        <end position="45"/>
    </location>
</feature>
<feature type="helix" evidence="3">
    <location>
        <begin position="61"/>
        <end position="63"/>
    </location>
</feature>
<feature type="turn" evidence="3">
    <location>
        <begin position="86"/>
        <end position="88"/>
    </location>
</feature>
<feature type="strand" evidence="3">
    <location>
        <begin position="90"/>
        <end position="96"/>
    </location>
</feature>
<feature type="helix" evidence="3">
    <location>
        <begin position="105"/>
        <end position="113"/>
    </location>
</feature>
<feature type="turn" evidence="3">
    <location>
        <begin position="114"/>
        <end position="116"/>
    </location>
</feature>
<feature type="strand" evidence="3">
    <location>
        <begin position="119"/>
        <end position="125"/>
    </location>
</feature>
<feature type="helix" evidence="3">
    <location>
        <begin position="131"/>
        <end position="133"/>
    </location>
</feature>
<feature type="helix" evidence="3">
    <location>
        <begin position="134"/>
        <end position="137"/>
    </location>
</feature>
<feature type="turn" evidence="3">
    <location>
        <begin position="138"/>
        <end position="140"/>
    </location>
</feature>
<feature type="turn" evidence="3">
    <location>
        <begin position="143"/>
        <end position="145"/>
    </location>
</feature>
<feature type="strand" evidence="3">
    <location>
        <begin position="148"/>
        <end position="151"/>
    </location>
</feature>
<feature type="helix" evidence="3">
    <location>
        <begin position="153"/>
        <end position="155"/>
    </location>
</feature>
<feature type="helix" evidence="3">
    <location>
        <begin position="156"/>
        <end position="168"/>
    </location>
</feature>
<feature type="helix" evidence="3">
    <location>
        <begin position="172"/>
        <end position="174"/>
    </location>
</feature>
<feature type="strand" evidence="3">
    <location>
        <begin position="180"/>
        <end position="184"/>
    </location>
</feature>
<feature type="helix" evidence="3">
    <location>
        <begin position="186"/>
        <end position="188"/>
    </location>
</feature>
<feature type="helix" evidence="3">
    <location>
        <begin position="189"/>
        <end position="192"/>
    </location>
</feature>
<feature type="helix" evidence="3">
    <location>
        <begin position="199"/>
        <end position="209"/>
    </location>
</feature>
<feature type="strand" evidence="3">
    <location>
        <begin position="215"/>
        <end position="221"/>
    </location>
</feature>
<feature type="helix" evidence="3">
    <location>
        <begin position="223"/>
        <end position="226"/>
    </location>
</feature>
<feature type="turn" evidence="3">
    <location>
        <begin position="227"/>
        <end position="229"/>
    </location>
</feature>
<feature type="helix" evidence="3">
    <location>
        <begin position="232"/>
        <end position="252"/>
    </location>
</feature>
<feature type="helix" evidence="3">
    <location>
        <begin position="257"/>
        <end position="261"/>
    </location>
</feature>
<feature type="strand" evidence="3">
    <location>
        <begin position="264"/>
        <end position="270"/>
    </location>
</feature>
<feature type="helix" evidence="3">
    <location>
        <begin position="274"/>
        <end position="295"/>
    </location>
</feature>
<feature type="helix" evidence="3">
    <location>
        <begin position="298"/>
        <end position="301"/>
    </location>
</feature>
<feature type="strand" evidence="3">
    <location>
        <begin position="305"/>
        <end position="309"/>
    </location>
</feature>
<feature type="strand" evidence="3">
    <location>
        <begin position="316"/>
        <end position="318"/>
    </location>
</feature>
<feature type="helix" evidence="3">
    <location>
        <begin position="321"/>
        <end position="335"/>
    </location>
</feature>
<feature type="strand" evidence="3">
    <location>
        <begin position="339"/>
        <end position="342"/>
    </location>
</feature>
<feature type="turn" evidence="3">
    <location>
        <begin position="346"/>
        <end position="349"/>
    </location>
</feature>
<feature type="helix" evidence="3">
    <location>
        <begin position="361"/>
        <end position="375"/>
    </location>
</feature>
<feature type="strand" evidence="3">
    <location>
        <begin position="381"/>
        <end position="384"/>
    </location>
</feature>
<feature type="turn" evidence="3">
    <location>
        <begin position="385"/>
        <end position="388"/>
    </location>
</feature>
<feature type="helix" evidence="3">
    <location>
        <begin position="390"/>
        <end position="412"/>
    </location>
</feature>
<feature type="turn" evidence="3">
    <location>
        <begin position="416"/>
        <end position="419"/>
    </location>
</feature>
<feature type="helix" evidence="3">
    <location>
        <begin position="420"/>
        <end position="439"/>
    </location>
</feature>
<feature type="turn" evidence="3">
    <location>
        <begin position="446"/>
        <end position="448"/>
    </location>
</feature>
<feature type="strand" evidence="3">
    <location>
        <begin position="449"/>
        <end position="451"/>
    </location>
</feature>
<feature type="turn" evidence="3">
    <location>
        <begin position="464"/>
        <end position="467"/>
    </location>
</feature>
<feature type="helix" evidence="3">
    <location>
        <begin position="473"/>
        <end position="489"/>
    </location>
</feature>
<feature type="strand" evidence="3">
    <location>
        <begin position="494"/>
        <end position="501"/>
    </location>
</feature>
<feature type="helix" evidence="3">
    <location>
        <begin position="503"/>
        <end position="519"/>
    </location>
</feature>
<feature type="strand" evidence="3">
    <location>
        <begin position="523"/>
        <end position="525"/>
    </location>
</feature>
<feature type="turn" evidence="3">
    <location>
        <begin position="532"/>
        <end position="534"/>
    </location>
</feature>
<feature type="helix" evidence="3">
    <location>
        <begin position="535"/>
        <end position="541"/>
    </location>
</feature>
<feature type="strand" evidence="3">
    <location>
        <begin position="546"/>
        <end position="552"/>
    </location>
</feature>
<feature type="helix" evidence="3">
    <location>
        <begin position="554"/>
        <end position="570"/>
    </location>
</feature>
<feature type="strand" evidence="3">
    <location>
        <begin position="574"/>
        <end position="580"/>
    </location>
</feature>
<feature type="helix" evidence="3">
    <location>
        <begin position="582"/>
        <end position="584"/>
    </location>
</feature>
<feature type="strand" evidence="3">
    <location>
        <begin position="593"/>
        <end position="596"/>
    </location>
</feature>
<feature type="helix" evidence="3">
    <location>
        <begin position="602"/>
        <end position="612"/>
    </location>
</feature>
<organism>
    <name type="scientific">Mycobacterium tuberculosis (strain ATCC 25618 / H37Rv)</name>
    <dbReference type="NCBI Taxonomy" id="83332"/>
    <lineage>
        <taxon>Bacteria</taxon>
        <taxon>Bacillati</taxon>
        <taxon>Actinomycetota</taxon>
        <taxon>Actinomycetes</taxon>
        <taxon>Mycobacteriales</taxon>
        <taxon>Mycobacteriaceae</taxon>
        <taxon>Mycobacterium</taxon>
        <taxon>Mycobacterium tuberculosis complex</taxon>
    </lineage>
</organism>
<proteinExistence type="evidence at protein level"/>
<accession>P9WJK7</accession>
<accession>L0T9S6</accession>
<accession>P65485</accession>
<accession>P71773</accession>
<sequence length="615" mass="64744">MSIDVPERADLEQVRGRWRNAVAGVLSKSNRTDSAQLGDHPERLLDTQTADGFAIRALYTAFDELPEPPLPGQWPFVRGGDPLRDVHSGWKVAEAFPANGATADTNAAVLAALGEGVSALLIRVGESGVAPDRLTALLSGVYLNLAPVILDAGADYRPACDVMLALVAQLDPGQRDTLSIDLGADPLTASLRDRPAPPIEEVVAVASRAAGERGLRAITVDGPAFHNLGATAATELAATVAAAVAYLRVLTESGLVVSDALRQISFRLAADDDQFMTLAKMRALRQLWARVAEVVGDPGGGAAVVHAETSLPMMTQRDPWVNMLRCTLAAFGAGVGGADTVLVHPFDVAIPGGFPGTAAGFARRIARNTQLLLLEESHVGRVLDPAGGSWFVEELTDRLARRAWQRFQAIEARGGFVEAHDFLAGQIAECAARRADDIAHRRLAITGVNEYPNLGEPALPPGDPTSPVRRYAAGFEALRDRSDHHLARTGARPRVLLLPLGPLAEHNIRTTFATNLLASGGIEAIDPGTVDAGTVGNAVADAGSPSVAVICGTDARYRDEVADIVQAARAAGVSRVYLAGPEKALGDAAHRPDEFLTAKINVVQALSNLLTRLGA</sequence>
<keyword id="KW-0002">3D-structure</keyword>
<keyword id="KW-0846">Cobalamin</keyword>
<keyword id="KW-0170">Cobalt</keyword>
<keyword id="KW-0413">Isomerase</keyword>
<keyword id="KW-1185">Reference proteome</keyword>
<gene>
    <name type="primary">mutA</name>
    <name type="ordered locus">Rv1492</name>
    <name type="ORF">MTCY277.14</name>
</gene>
<protein>
    <recommendedName>
        <fullName>Probable methylmalonyl-CoA mutase small subunit</fullName>
        <shortName>MCM</shortName>
        <ecNumber>5.4.99.2</ecNumber>
    </recommendedName>
</protein>
<evidence type="ECO:0000250" key="1"/>
<evidence type="ECO:0000305" key="2"/>
<evidence type="ECO:0007829" key="3">
    <source>
        <dbReference type="PDB" id="6OXC"/>
    </source>
</evidence>
<comment type="function">
    <text evidence="1">Catalyzes the isomerization of succinyl-CoA to methylmalonyl-CoA during synthesis of propionate from tricarboxylic acid-cycle intermediates.</text>
</comment>
<comment type="catalytic activity">
    <reaction>
        <text>(R)-methylmalonyl-CoA = succinyl-CoA</text>
        <dbReference type="Rhea" id="RHEA:22888"/>
        <dbReference type="ChEBI" id="CHEBI:57292"/>
        <dbReference type="ChEBI" id="CHEBI:57326"/>
        <dbReference type="EC" id="5.4.99.2"/>
    </reaction>
</comment>
<comment type="cofactor">
    <cofactor evidence="1">
        <name>adenosylcob(III)alamin</name>
        <dbReference type="ChEBI" id="CHEBI:18408"/>
    </cofactor>
</comment>
<comment type="pathway">
    <text>Metabolic intermediate metabolism; propanoyl-CoA degradation; succinyl-CoA from propanoyl-CoA: step 3/3.</text>
</comment>
<comment type="subunit">
    <text evidence="1">Heterodimer of an alpha and a beta chain.</text>
</comment>
<comment type="miscellaneous">
    <text>Was identified as a high-confidence drug target.</text>
</comment>
<comment type="similarity">
    <text evidence="2">Belongs to the methylmalonyl-CoA mutase family.</text>
</comment>
<name>MUTA_MYCTU</name>